<reference key="1">
    <citation type="journal article" date="2008" name="J. Bacteriol.">
        <title>The pangenome structure of Escherichia coli: comparative genomic analysis of E. coli commensal and pathogenic isolates.</title>
        <authorList>
            <person name="Rasko D.A."/>
            <person name="Rosovitz M.J."/>
            <person name="Myers G.S.A."/>
            <person name="Mongodin E.F."/>
            <person name="Fricke W.F."/>
            <person name="Gajer P."/>
            <person name="Crabtree J."/>
            <person name="Sebaihia M."/>
            <person name="Thomson N.R."/>
            <person name="Chaudhuri R."/>
            <person name="Henderson I.R."/>
            <person name="Sperandio V."/>
            <person name="Ravel J."/>
        </authorList>
    </citation>
    <scope>NUCLEOTIDE SEQUENCE [LARGE SCALE GENOMIC DNA]</scope>
    <source>
        <strain>E24377A / ETEC</strain>
    </source>
</reference>
<dbReference type="EMBL" id="CP000800">
    <property type="protein sequence ID" value="ABV16974.1"/>
    <property type="molecule type" value="Genomic_DNA"/>
</dbReference>
<dbReference type="RefSeq" id="WP_000384306.1">
    <property type="nucleotide sequence ID" value="NC_009801.1"/>
</dbReference>
<dbReference type="GeneID" id="93777317"/>
<dbReference type="KEGG" id="ecw:EcE24377A_0121"/>
<dbReference type="HOGENOM" id="CLU_139226_0_0_6"/>
<dbReference type="Proteomes" id="UP000001122">
    <property type="component" value="Chromosome"/>
</dbReference>
<dbReference type="HAMAP" id="MF_01053">
    <property type="entry name" value="UPF0231"/>
    <property type="match status" value="1"/>
</dbReference>
<dbReference type="InterPro" id="IPR008249">
    <property type="entry name" value="UPF0231"/>
</dbReference>
<dbReference type="NCBIfam" id="NF003574">
    <property type="entry name" value="PRK05248.1-1"/>
    <property type="match status" value="1"/>
</dbReference>
<dbReference type="NCBIfam" id="NF003576">
    <property type="entry name" value="PRK05248.1-3"/>
    <property type="match status" value="1"/>
</dbReference>
<dbReference type="Pfam" id="PF06062">
    <property type="entry name" value="UPF0231"/>
    <property type="match status" value="1"/>
</dbReference>
<dbReference type="PIRSF" id="PIRSF006287">
    <property type="entry name" value="UCP006287"/>
    <property type="match status" value="1"/>
</dbReference>
<keyword id="KW-1185">Reference proteome</keyword>
<protein>
    <recommendedName>
        <fullName evidence="1">UPF0231 protein YacL</fullName>
    </recommendedName>
</protein>
<name>YACL_ECO24</name>
<gene>
    <name evidence="1" type="primary">yacL</name>
    <name type="ordered locus">EcE24377A_0121</name>
</gene>
<accession>A7ZHK8</accession>
<comment type="similarity">
    <text evidence="1">Belongs to the UPF0231 family.</text>
</comment>
<organism>
    <name type="scientific">Escherichia coli O139:H28 (strain E24377A / ETEC)</name>
    <dbReference type="NCBI Taxonomy" id="331111"/>
    <lineage>
        <taxon>Bacteria</taxon>
        <taxon>Pseudomonadati</taxon>
        <taxon>Pseudomonadota</taxon>
        <taxon>Gammaproteobacteria</taxon>
        <taxon>Enterobacterales</taxon>
        <taxon>Enterobacteriaceae</taxon>
        <taxon>Escherichia</taxon>
    </lineage>
</organism>
<evidence type="ECO:0000255" key="1">
    <source>
        <dbReference type="HAMAP-Rule" id="MF_01053"/>
    </source>
</evidence>
<proteinExistence type="inferred from homology"/>
<feature type="chain" id="PRO_1000064357" description="UPF0231 protein YacL">
    <location>
        <begin position="1"/>
        <end position="120"/>
    </location>
</feature>
<sequence length="120" mass="13942">MDYEFLRDITGVVKVRMSMGHEVVGHWFNEEVKENLALLDEVEQAAHALKGSERSWQRAGHEYTLWMDGEEVMVRANQLEFAGDEMEEGMNYYDEESLSLCGVEDFLQVVAAYRNFVQQK</sequence>